<name>YRHH_BACSU</name>
<proteinExistence type="evidence at transcript level"/>
<comment type="induction">
    <text evidence="1">By the natural cationic antimicrobial peptide LL-37 and the synthetic cationic antimicrobial peptide poly-L-lysine (PLL).</text>
</comment>
<comment type="similarity">
    <text evidence="2">Belongs to the methyltransferase superfamily.</text>
</comment>
<reference key="1">
    <citation type="journal article" date="1997" name="Microbiology">
        <title>Sequence of the Bacillus subtilis genome region in the vicinity of the lev operon reveals two new extracytoplasmic function RNA polymerase sigma factors SigV and SigZ.</title>
        <authorList>
            <person name="Sorokin A."/>
            <person name="Bolotin A."/>
            <person name="Purnelle B."/>
            <person name="Hilbert H."/>
            <person name="Lauber J."/>
            <person name="Duesterhoeft A."/>
            <person name="Ehrlich S.D."/>
        </authorList>
    </citation>
    <scope>NUCLEOTIDE SEQUENCE [GENOMIC DNA]</scope>
    <source>
        <strain>168</strain>
    </source>
</reference>
<reference key="2">
    <citation type="journal article" date="1997" name="Nature">
        <title>The complete genome sequence of the Gram-positive bacterium Bacillus subtilis.</title>
        <authorList>
            <person name="Kunst F."/>
            <person name="Ogasawara N."/>
            <person name="Moszer I."/>
            <person name="Albertini A.M."/>
            <person name="Alloni G."/>
            <person name="Azevedo V."/>
            <person name="Bertero M.G."/>
            <person name="Bessieres P."/>
            <person name="Bolotin A."/>
            <person name="Borchert S."/>
            <person name="Borriss R."/>
            <person name="Boursier L."/>
            <person name="Brans A."/>
            <person name="Braun M."/>
            <person name="Brignell S.C."/>
            <person name="Bron S."/>
            <person name="Brouillet S."/>
            <person name="Bruschi C.V."/>
            <person name="Caldwell B."/>
            <person name="Capuano V."/>
            <person name="Carter N.M."/>
            <person name="Choi S.-K."/>
            <person name="Codani J.-J."/>
            <person name="Connerton I.F."/>
            <person name="Cummings N.J."/>
            <person name="Daniel R.A."/>
            <person name="Denizot F."/>
            <person name="Devine K.M."/>
            <person name="Duesterhoeft A."/>
            <person name="Ehrlich S.D."/>
            <person name="Emmerson P.T."/>
            <person name="Entian K.-D."/>
            <person name="Errington J."/>
            <person name="Fabret C."/>
            <person name="Ferrari E."/>
            <person name="Foulger D."/>
            <person name="Fritz C."/>
            <person name="Fujita M."/>
            <person name="Fujita Y."/>
            <person name="Fuma S."/>
            <person name="Galizzi A."/>
            <person name="Galleron N."/>
            <person name="Ghim S.-Y."/>
            <person name="Glaser P."/>
            <person name="Goffeau A."/>
            <person name="Golightly E.J."/>
            <person name="Grandi G."/>
            <person name="Guiseppi G."/>
            <person name="Guy B.J."/>
            <person name="Haga K."/>
            <person name="Haiech J."/>
            <person name="Harwood C.R."/>
            <person name="Henaut A."/>
            <person name="Hilbert H."/>
            <person name="Holsappel S."/>
            <person name="Hosono S."/>
            <person name="Hullo M.-F."/>
            <person name="Itaya M."/>
            <person name="Jones L.-M."/>
            <person name="Joris B."/>
            <person name="Karamata D."/>
            <person name="Kasahara Y."/>
            <person name="Klaerr-Blanchard M."/>
            <person name="Klein C."/>
            <person name="Kobayashi Y."/>
            <person name="Koetter P."/>
            <person name="Koningstein G."/>
            <person name="Krogh S."/>
            <person name="Kumano M."/>
            <person name="Kurita K."/>
            <person name="Lapidus A."/>
            <person name="Lardinois S."/>
            <person name="Lauber J."/>
            <person name="Lazarevic V."/>
            <person name="Lee S.-M."/>
            <person name="Levine A."/>
            <person name="Liu H."/>
            <person name="Masuda S."/>
            <person name="Mauel C."/>
            <person name="Medigue C."/>
            <person name="Medina N."/>
            <person name="Mellado R.P."/>
            <person name="Mizuno M."/>
            <person name="Moestl D."/>
            <person name="Nakai S."/>
            <person name="Noback M."/>
            <person name="Noone D."/>
            <person name="O'Reilly M."/>
            <person name="Ogawa K."/>
            <person name="Ogiwara A."/>
            <person name="Oudega B."/>
            <person name="Park S.-H."/>
            <person name="Parro V."/>
            <person name="Pohl T.M."/>
            <person name="Portetelle D."/>
            <person name="Porwollik S."/>
            <person name="Prescott A.M."/>
            <person name="Presecan E."/>
            <person name="Pujic P."/>
            <person name="Purnelle B."/>
            <person name="Rapoport G."/>
            <person name="Rey M."/>
            <person name="Reynolds S."/>
            <person name="Rieger M."/>
            <person name="Rivolta C."/>
            <person name="Rocha E."/>
            <person name="Roche B."/>
            <person name="Rose M."/>
            <person name="Sadaie Y."/>
            <person name="Sato T."/>
            <person name="Scanlan E."/>
            <person name="Schleich S."/>
            <person name="Schroeter R."/>
            <person name="Scoffone F."/>
            <person name="Sekiguchi J."/>
            <person name="Sekowska A."/>
            <person name="Seror S.J."/>
            <person name="Serror P."/>
            <person name="Shin B.-S."/>
            <person name="Soldo B."/>
            <person name="Sorokin A."/>
            <person name="Tacconi E."/>
            <person name="Takagi T."/>
            <person name="Takahashi H."/>
            <person name="Takemaru K."/>
            <person name="Takeuchi M."/>
            <person name="Tamakoshi A."/>
            <person name="Tanaka T."/>
            <person name="Terpstra P."/>
            <person name="Tognoni A."/>
            <person name="Tosato V."/>
            <person name="Uchiyama S."/>
            <person name="Vandenbol M."/>
            <person name="Vannier F."/>
            <person name="Vassarotti A."/>
            <person name="Viari A."/>
            <person name="Wambutt R."/>
            <person name="Wedler E."/>
            <person name="Wedler H."/>
            <person name="Weitzenegger T."/>
            <person name="Winters P."/>
            <person name="Wipat A."/>
            <person name="Yamamoto H."/>
            <person name="Yamane K."/>
            <person name="Yasumoto K."/>
            <person name="Yata K."/>
            <person name="Yoshida K."/>
            <person name="Yoshikawa H.-F."/>
            <person name="Zumstein E."/>
            <person name="Yoshikawa H."/>
            <person name="Danchin A."/>
        </authorList>
    </citation>
    <scope>NUCLEOTIDE SEQUENCE [LARGE SCALE GENOMIC DNA]</scope>
    <source>
        <strain>168</strain>
    </source>
</reference>
<reference key="3">
    <citation type="journal article" date="2005" name="Microbiology">
        <title>Cationic antimicrobial peptides elicit a complex stress response in Bacillus subtilis that involves ECF-type sigma factors and two-component signal transduction systems.</title>
        <authorList>
            <person name="Pietiaeinen M."/>
            <person name="Gardemeister M."/>
            <person name="Mecklin M."/>
            <person name="Leskelae S."/>
            <person name="Sarvas M."/>
            <person name="Kontinen V.P."/>
        </authorList>
    </citation>
    <scope>INDUCTION BY LL-37 AND PLL</scope>
</reference>
<keyword id="KW-0489">Methyltransferase</keyword>
<keyword id="KW-1185">Reference proteome</keyword>
<keyword id="KW-0346">Stress response</keyword>
<keyword id="KW-0808">Transferase</keyword>
<organism>
    <name type="scientific">Bacillus subtilis (strain 168)</name>
    <dbReference type="NCBI Taxonomy" id="224308"/>
    <lineage>
        <taxon>Bacteria</taxon>
        <taxon>Bacillati</taxon>
        <taxon>Bacillota</taxon>
        <taxon>Bacilli</taxon>
        <taxon>Bacillales</taxon>
        <taxon>Bacillaceae</taxon>
        <taxon>Bacillus</taxon>
    </lineage>
</organism>
<protein>
    <recommendedName>
        <fullName>Putative methyltransferase YrhH</fullName>
        <ecNumber>2.1.1.-</ecNumber>
    </recommendedName>
</protein>
<dbReference type="EC" id="2.1.1.-"/>
<dbReference type="EMBL" id="U93874">
    <property type="protein sequence ID" value="AAB80865.1"/>
    <property type="molecule type" value="Genomic_DNA"/>
</dbReference>
<dbReference type="EMBL" id="AL009126">
    <property type="protein sequence ID" value="CAB14660.1"/>
    <property type="molecule type" value="Genomic_DNA"/>
</dbReference>
<dbReference type="PIR" id="G69974">
    <property type="entry name" value="G69974"/>
</dbReference>
<dbReference type="RefSeq" id="NP_390596.1">
    <property type="nucleotide sequence ID" value="NC_000964.3"/>
</dbReference>
<dbReference type="RefSeq" id="WP_004398716.1">
    <property type="nucleotide sequence ID" value="NZ_OZ025638.1"/>
</dbReference>
<dbReference type="SMR" id="O05400"/>
<dbReference type="FunCoup" id="O05400">
    <property type="interactions" value="48"/>
</dbReference>
<dbReference type="STRING" id="224308.BSU27180"/>
<dbReference type="PaxDb" id="224308-BSU27180"/>
<dbReference type="EnsemblBacteria" id="CAB14660">
    <property type="protein sequence ID" value="CAB14660"/>
    <property type="gene ID" value="BSU_27180"/>
</dbReference>
<dbReference type="GeneID" id="938507"/>
<dbReference type="KEGG" id="bsu:BSU27180"/>
<dbReference type="PATRIC" id="fig|224308.179.peg.2951"/>
<dbReference type="eggNOG" id="COG2226">
    <property type="taxonomic scope" value="Bacteria"/>
</dbReference>
<dbReference type="InParanoid" id="O05400"/>
<dbReference type="OrthoDB" id="43862at2"/>
<dbReference type="PhylomeDB" id="O05400"/>
<dbReference type="BioCyc" id="BSUB:BSU27180-MONOMER"/>
<dbReference type="Proteomes" id="UP000001570">
    <property type="component" value="Chromosome"/>
</dbReference>
<dbReference type="GO" id="GO:0008168">
    <property type="term" value="F:methyltransferase activity"/>
    <property type="evidence" value="ECO:0000318"/>
    <property type="project" value="GO_Central"/>
</dbReference>
<dbReference type="GO" id="GO:0008757">
    <property type="term" value="F:S-adenosylmethionine-dependent methyltransferase activity"/>
    <property type="evidence" value="ECO:0007669"/>
    <property type="project" value="InterPro"/>
</dbReference>
<dbReference type="GO" id="GO:0032259">
    <property type="term" value="P:methylation"/>
    <property type="evidence" value="ECO:0007669"/>
    <property type="project" value="UniProtKB-KW"/>
</dbReference>
<dbReference type="CDD" id="cd02440">
    <property type="entry name" value="AdoMet_MTases"/>
    <property type="match status" value="1"/>
</dbReference>
<dbReference type="Gene3D" id="3.40.50.150">
    <property type="entry name" value="Vaccinia Virus protein VP39"/>
    <property type="match status" value="1"/>
</dbReference>
<dbReference type="InterPro" id="IPR013216">
    <property type="entry name" value="Methyltransf_11"/>
</dbReference>
<dbReference type="InterPro" id="IPR029063">
    <property type="entry name" value="SAM-dependent_MTases_sf"/>
</dbReference>
<dbReference type="Pfam" id="PF08241">
    <property type="entry name" value="Methyltransf_11"/>
    <property type="match status" value="1"/>
</dbReference>
<dbReference type="SUPFAM" id="SSF53335">
    <property type="entry name" value="S-adenosyl-L-methionine-dependent methyltransferases"/>
    <property type="match status" value="1"/>
</dbReference>
<feature type="chain" id="PRO_0000360058" description="Putative methyltransferase YrhH">
    <location>
        <begin position="1"/>
        <end position="180"/>
    </location>
</feature>
<accession>O05400</accession>
<accession>Q795Y5</accession>
<sequence>MLENRLYKRSDFWKLFSRKYKLTKTIEHMMIDSIDIQENDRILEIGIGNGTVFKSITKKLKKGSLKSIDPSKRKVRQISRANRKNMGNGEVFHGYPEDIPFDDRTFNKVFSLHTVQSCTDIRLALREIYRVLQIDGRFYISIDTNTGEKEKTYIQLLKDQHFRDLSVIRRASCLCIVAVK</sequence>
<gene>
    <name type="primary">yrhH</name>
    <name type="ordered locus">BSU27180</name>
</gene>
<evidence type="ECO:0000269" key="1">
    <source>
    </source>
</evidence>
<evidence type="ECO:0000305" key="2"/>